<accession>Q6AY09</accession>
<comment type="function">
    <text evidence="1">This protein is a component of the heterogeneous nuclear ribonucleoprotein (hnRNP) complexes which provide the substrate for the processing events that pre-mRNAs undergo before becoming functional, translatable mRNAs in the cytoplasm. Binds poly(RG) (By similarity).</text>
</comment>
<comment type="subunit">
    <text evidence="3">Component of a ribonucleoprotein complex containing mRNAs and RNA-binding proteins including DDX5, HNRNPH2 and SRSF1 as well as splicing regulator ARVCF. Interacts with TXNL4/DIM1.</text>
</comment>
<comment type="subcellular location">
    <subcellularLocation>
        <location evidence="3">Nucleus</location>
        <location evidence="3">Nucleoplasm</location>
    </subcellularLocation>
</comment>
<name>HNRH2_RAT</name>
<evidence type="ECO:0000250" key="1"/>
<evidence type="ECO:0000250" key="2">
    <source>
        <dbReference type="UniProtKB" id="P31943"/>
    </source>
</evidence>
<evidence type="ECO:0000250" key="3">
    <source>
        <dbReference type="UniProtKB" id="P55795"/>
    </source>
</evidence>
<evidence type="ECO:0000250" key="4">
    <source>
        <dbReference type="UniProtKB" id="P70333"/>
    </source>
</evidence>
<evidence type="ECO:0000255" key="5">
    <source>
        <dbReference type="PROSITE-ProRule" id="PRU00176"/>
    </source>
</evidence>
<reference key="1">
    <citation type="journal article" date="2004" name="Genome Res.">
        <title>The status, quality, and expansion of the NIH full-length cDNA project: the Mammalian Gene Collection (MGC).</title>
        <authorList>
            <consortium name="The MGC Project Team"/>
        </authorList>
    </citation>
    <scope>NUCLEOTIDE SEQUENCE [LARGE SCALE MRNA]</scope>
    <source>
        <tissue>Testis</tissue>
    </source>
</reference>
<reference key="2">
    <citation type="submission" date="2009-01" db="UniProtKB">
        <authorList>
            <person name="Lubec G."/>
            <person name="Afjehi-Sadat L."/>
            <person name="Chen W.-Q."/>
        </authorList>
    </citation>
    <scope>PROTEIN SEQUENCE OF 50-68; 74-81; 99-114; 151-167; 193-200; 263-294 AND 300-347</scope>
    <scope>IDENTIFICATION BY MASS SPECTROMETRY</scope>
    <source>
        <strain>Sprague-Dawley</strain>
        <tissue>Hippocampus</tissue>
        <tissue>Spinal cord</tissue>
    </source>
</reference>
<dbReference type="EMBL" id="BC079240">
    <property type="protein sequence ID" value="AAH79240.1"/>
    <property type="molecule type" value="mRNA"/>
</dbReference>
<dbReference type="RefSeq" id="NP_001014041.1">
    <property type="nucleotide sequence ID" value="NM_001014019.1"/>
</dbReference>
<dbReference type="RefSeq" id="XP_006257281.1">
    <property type="nucleotide sequence ID" value="XM_006257219.5"/>
</dbReference>
<dbReference type="RefSeq" id="XP_006257282.1">
    <property type="nucleotide sequence ID" value="XM_006257220.5"/>
</dbReference>
<dbReference type="RefSeq" id="XP_006257283.1">
    <property type="nucleotide sequence ID" value="XM_006257221.4"/>
</dbReference>
<dbReference type="RefSeq" id="XP_063136038.1">
    <property type="nucleotide sequence ID" value="XM_063279968.1"/>
</dbReference>
<dbReference type="SMR" id="Q6AY09"/>
<dbReference type="BioGRID" id="259096">
    <property type="interactions" value="4"/>
</dbReference>
<dbReference type="FunCoup" id="Q6AY09">
    <property type="interactions" value="3871"/>
</dbReference>
<dbReference type="IntAct" id="Q6AY09">
    <property type="interactions" value="2"/>
</dbReference>
<dbReference type="MINT" id="Q6AY09"/>
<dbReference type="STRING" id="10116.ENSRNOP00000015518"/>
<dbReference type="GlyGen" id="Q6AY09">
    <property type="glycosylation" value="1 site, 1 O-linked glycan (1 site)"/>
</dbReference>
<dbReference type="iPTMnet" id="Q6AY09"/>
<dbReference type="PhosphoSitePlus" id="Q6AY09"/>
<dbReference type="jPOST" id="Q6AY09"/>
<dbReference type="PaxDb" id="10116-ENSRNOP00000015518"/>
<dbReference type="Ensembl" id="ENSRNOT00000015518.5">
    <property type="protein sequence ID" value="ENSRNOP00000015518.3"/>
    <property type="gene ID" value="ENSRNOG00000011661.6"/>
</dbReference>
<dbReference type="Ensembl" id="ENSRNOT00000096902.1">
    <property type="protein sequence ID" value="ENSRNOP00000089581.1"/>
    <property type="gene ID" value="ENSRNOG00000011661.6"/>
</dbReference>
<dbReference type="Ensembl" id="ENSRNOT00000119849.1">
    <property type="protein sequence ID" value="ENSRNOP00000096745.1"/>
    <property type="gene ID" value="ENSRNOG00000011661.6"/>
</dbReference>
<dbReference type="GeneID" id="308650"/>
<dbReference type="KEGG" id="rno:308650"/>
<dbReference type="UCSC" id="RGD:1549784">
    <property type="organism name" value="rat"/>
</dbReference>
<dbReference type="AGR" id="RGD:1549784"/>
<dbReference type="CTD" id="3188"/>
<dbReference type="RGD" id="1549784">
    <property type="gene designation" value="Hnrnph2"/>
</dbReference>
<dbReference type="eggNOG" id="KOG4211">
    <property type="taxonomic scope" value="Eukaryota"/>
</dbReference>
<dbReference type="GeneTree" id="ENSGT00940000153503"/>
<dbReference type="HOGENOM" id="CLU_032003_1_0_1"/>
<dbReference type="InParanoid" id="Q6AY09"/>
<dbReference type="OMA" id="YSCTEDQ"/>
<dbReference type="OrthoDB" id="55525at9989"/>
<dbReference type="PhylomeDB" id="Q6AY09"/>
<dbReference type="TreeFam" id="TF316157"/>
<dbReference type="Reactome" id="R-RNO-72163">
    <property type="pathway name" value="mRNA Splicing - Major Pathway"/>
</dbReference>
<dbReference type="Reactome" id="R-RNO-72203">
    <property type="pathway name" value="Processing of Capped Intron-Containing Pre-mRNA"/>
</dbReference>
<dbReference type="PRO" id="PR:Q6AY09"/>
<dbReference type="Proteomes" id="UP000002494">
    <property type="component" value="Chromosome X"/>
</dbReference>
<dbReference type="Bgee" id="ENSRNOG00000011661">
    <property type="expression patterns" value="Expressed in cerebellum and 18 other cell types or tissues"/>
</dbReference>
<dbReference type="GO" id="GO:0005654">
    <property type="term" value="C:nucleoplasm"/>
    <property type="evidence" value="ECO:0000250"/>
    <property type="project" value="UniProtKB"/>
</dbReference>
<dbReference type="GO" id="GO:0014069">
    <property type="term" value="C:postsynaptic density"/>
    <property type="evidence" value="ECO:0000314"/>
    <property type="project" value="SynGO"/>
</dbReference>
<dbReference type="GO" id="GO:1990904">
    <property type="term" value="C:ribonucleoprotein complex"/>
    <property type="evidence" value="ECO:0000266"/>
    <property type="project" value="RGD"/>
</dbReference>
<dbReference type="GO" id="GO:0003723">
    <property type="term" value="F:RNA binding"/>
    <property type="evidence" value="ECO:0000318"/>
    <property type="project" value="GO_Central"/>
</dbReference>
<dbReference type="GO" id="GO:0043484">
    <property type="term" value="P:regulation of RNA splicing"/>
    <property type="evidence" value="ECO:0000318"/>
    <property type="project" value="GO_Central"/>
</dbReference>
<dbReference type="CDD" id="cd12729">
    <property type="entry name" value="RRM1_hnRNPH_hnRNPH2_hnRNPF"/>
    <property type="match status" value="1"/>
</dbReference>
<dbReference type="CDD" id="cd12731">
    <property type="entry name" value="RRM2_hnRNPH_hnRNPH2_hnRNPF"/>
    <property type="match status" value="1"/>
</dbReference>
<dbReference type="CDD" id="cd12734">
    <property type="entry name" value="RRM3_hnRNPH_hnRNPH2_hnRNPF"/>
    <property type="match status" value="1"/>
</dbReference>
<dbReference type="FunFam" id="3.30.70.330:FF:000071">
    <property type="entry name" value="heterogeneous nuclear ribonucleoprotein H isoform X1"/>
    <property type="match status" value="1"/>
</dbReference>
<dbReference type="FunFam" id="3.30.70.330:FF:000075">
    <property type="entry name" value="Heterogeneous nuclear ribonucleoprotein H1 (H)"/>
    <property type="match status" value="1"/>
</dbReference>
<dbReference type="FunFam" id="3.30.70.330:FF:000031">
    <property type="entry name" value="Heterogeneous nuclear ribonucleoprotein h3 isoform"/>
    <property type="match status" value="1"/>
</dbReference>
<dbReference type="Gene3D" id="3.30.70.330">
    <property type="match status" value="3"/>
</dbReference>
<dbReference type="InterPro" id="IPR050666">
    <property type="entry name" value="ESRP"/>
</dbReference>
<dbReference type="InterPro" id="IPR012677">
    <property type="entry name" value="Nucleotide-bd_a/b_plait_sf"/>
</dbReference>
<dbReference type="InterPro" id="IPR035979">
    <property type="entry name" value="RBD_domain_sf"/>
</dbReference>
<dbReference type="InterPro" id="IPR000504">
    <property type="entry name" value="RRM_dom"/>
</dbReference>
<dbReference type="InterPro" id="IPR012996">
    <property type="entry name" value="Znf_CHHC"/>
</dbReference>
<dbReference type="PANTHER" id="PTHR13976">
    <property type="entry name" value="HETEROGENEOUS NUCLEAR RIBONUCLEOPROTEIN-RELATED"/>
    <property type="match status" value="1"/>
</dbReference>
<dbReference type="Pfam" id="PF00076">
    <property type="entry name" value="RRM_1"/>
    <property type="match status" value="3"/>
</dbReference>
<dbReference type="Pfam" id="PF08080">
    <property type="entry name" value="zf-RNPHF"/>
    <property type="match status" value="1"/>
</dbReference>
<dbReference type="SMART" id="SM00360">
    <property type="entry name" value="RRM"/>
    <property type="match status" value="3"/>
</dbReference>
<dbReference type="SUPFAM" id="SSF54928">
    <property type="entry name" value="RNA-binding domain, RBD"/>
    <property type="match status" value="3"/>
</dbReference>
<dbReference type="PROSITE" id="PS50102">
    <property type="entry name" value="RRM"/>
    <property type="match status" value="3"/>
</dbReference>
<feature type="chain" id="PRO_0000434388" description="Heterogeneous nuclear ribonucleoprotein H2">
    <location>
        <begin position="1"/>
        <end position="449"/>
    </location>
</feature>
<feature type="initiator methionine" description="Removed; alternate" evidence="2">
    <location>
        <position position="1"/>
    </location>
</feature>
<feature type="chain" id="PRO_0000271397" description="Heterogeneous nuclear ribonucleoprotein H2, N-terminally processed">
    <location>
        <begin position="2"/>
        <end position="449"/>
    </location>
</feature>
<feature type="domain" description="RRM 1" evidence="5">
    <location>
        <begin position="11"/>
        <end position="90"/>
    </location>
</feature>
<feature type="domain" description="RRM 2" evidence="5">
    <location>
        <begin position="111"/>
        <end position="188"/>
    </location>
</feature>
<feature type="repeat" description="1-1">
    <location>
        <begin position="234"/>
        <end position="249"/>
    </location>
</feature>
<feature type="domain" description="RRM 3" evidence="5">
    <location>
        <begin position="289"/>
        <end position="364"/>
    </location>
</feature>
<feature type="repeat" description="2-1">
    <location>
        <begin position="354"/>
        <end position="372"/>
    </location>
</feature>
<feature type="repeat" description="2-2">
    <location>
        <begin position="374"/>
        <end position="392"/>
    </location>
</feature>
<feature type="repeat" description="1-2">
    <location>
        <begin position="418"/>
        <end position="433"/>
    </location>
</feature>
<feature type="region of interest" description="2 X 16 AA Gly-rich approximate repeats">
    <location>
        <begin position="234"/>
        <end position="433"/>
    </location>
</feature>
<feature type="region of interest" description="2 X 19 AA perfect repeats">
    <location>
        <begin position="354"/>
        <end position="392"/>
    </location>
</feature>
<feature type="modified residue" description="N-acetylmethionine" evidence="2">
    <location>
        <position position="1"/>
    </location>
</feature>
<feature type="modified residue" description="N-acetylmethionine; in Heterogeneous nuclear ribonucleoprotein H2, N-terminally processed" evidence="2">
    <location>
        <position position="2"/>
    </location>
</feature>
<feature type="modified residue" description="Phosphoserine" evidence="2">
    <location>
        <position position="23"/>
    </location>
</feature>
<feature type="modified residue" description="Phosphoserine" evidence="2">
    <location>
        <position position="54"/>
    </location>
</feature>
<feature type="modified residue" description="Phosphoserine" evidence="2">
    <location>
        <position position="63"/>
    </location>
</feature>
<feature type="modified residue" description="Phosphoserine" evidence="4">
    <location>
        <position position="90"/>
    </location>
</feature>
<feature type="modified residue" description="Dimethylated arginine; alternate" evidence="2">
    <location>
        <position position="233"/>
    </location>
</feature>
<feature type="modified residue" description="Omega-N-methylarginine; alternate" evidence="3">
    <location>
        <position position="233"/>
    </location>
</feature>
<feature type="modified residue" description="Phosphotyrosine" evidence="2">
    <location>
        <position position="246"/>
    </location>
</feature>
<feature type="modified residue" description="Phosphoserine" evidence="3">
    <location>
        <position position="310"/>
    </location>
</feature>
<feature type="cross-link" description="Glycyl lysine isopeptide (Lys-Gly) (interchain with G-Cter in SUMO2)" evidence="3">
    <location>
        <position position="35"/>
    </location>
</feature>
<feature type="cross-link" description="Glycyl lysine isopeptide (Lys-Gly) (interchain with G-Cter in SUMO2)" evidence="2">
    <location>
        <position position="87"/>
    </location>
</feature>
<feature type="cross-link" description="Glycyl lysine isopeptide (Lys-Gly) (interchain with G-Cter in SUMO2)" evidence="2">
    <location>
        <position position="98"/>
    </location>
</feature>
<gene>
    <name type="primary">Hnrnph2</name>
    <name type="synonym">Hnrph2</name>
</gene>
<proteinExistence type="evidence at protein level"/>
<protein>
    <recommendedName>
        <fullName>Heterogeneous nuclear ribonucleoprotein H2</fullName>
        <shortName>hnRNP H2</shortName>
    </recommendedName>
    <alternativeName>
        <fullName>Heterogeneous nuclear ribonucleoprotein H'</fullName>
        <shortName>hnRNP H'</shortName>
    </alternativeName>
    <component>
        <recommendedName>
            <fullName>Heterogeneous nuclear ribonucleoprotein H2, N-terminally processed</fullName>
        </recommendedName>
    </component>
</protein>
<organism>
    <name type="scientific">Rattus norvegicus</name>
    <name type="common">Rat</name>
    <dbReference type="NCBI Taxonomy" id="10116"/>
    <lineage>
        <taxon>Eukaryota</taxon>
        <taxon>Metazoa</taxon>
        <taxon>Chordata</taxon>
        <taxon>Craniata</taxon>
        <taxon>Vertebrata</taxon>
        <taxon>Euteleostomi</taxon>
        <taxon>Mammalia</taxon>
        <taxon>Eutheria</taxon>
        <taxon>Euarchontoglires</taxon>
        <taxon>Glires</taxon>
        <taxon>Rodentia</taxon>
        <taxon>Myomorpha</taxon>
        <taxon>Muroidea</taxon>
        <taxon>Muridae</taxon>
        <taxon>Murinae</taxon>
        <taxon>Rattus</taxon>
    </lineage>
</organism>
<sequence length="449" mass="49294">MMLSTEGREGFVVKVRGLPWSCSAEEVMRFFSDCKIQNGTSGVRFIYTREGRPSGEAFVELESEDEVKLALKKDRETMGHRYVEVFKSNSVEMDWVLKHTGPNSPDTANDGFVRLRGLPFGCSKEEIVQFFSGLEIVPNGMTLPVDFQGRSTGEAFVQFASQEIAEKALKKHKERIGHRYIEIFKSSRAEVRTHYDPPRKLMTMQRPGPYDRPGAGRGYNSIGRGAGFERMRRGAYGGGYGGYDDYGGYNDGYGFGSDRFGRDLNYCFSGMSDHRYGDGGSSFQSTTGHCVHMRGLPYRATENDIYNFFSPLNPMRVHIEIGPDGRVTGEADVEFATHEDAVAAMAKDKANMQHRYVELFLNSTAGTSGGAYDHSYVELFLNSTAGASGGAYGSQMMGGMGLSNQSSYGGPASQQLSAGYGGGYGGQSSMSGYDQVLQENSSDYQSNLA</sequence>
<keyword id="KW-0007">Acetylation</keyword>
<keyword id="KW-0903">Direct protein sequencing</keyword>
<keyword id="KW-1017">Isopeptide bond</keyword>
<keyword id="KW-0488">Methylation</keyword>
<keyword id="KW-0539">Nucleus</keyword>
<keyword id="KW-0597">Phosphoprotein</keyword>
<keyword id="KW-1185">Reference proteome</keyword>
<keyword id="KW-0677">Repeat</keyword>
<keyword id="KW-0687">Ribonucleoprotein</keyword>
<keyword id="KW-0694">RNA-binding</keyword>
<keyword id="KW-0832">Ubl conjugation</keyword>